<accession>Q9WTQ8</accession>
<keyword id="KW-0472">Membrane</keyword>
<keyword id="KW-0496">Mitochondrion</keyword>
<keyword id="KW-0999">Mitochondrion inner membrane</keyword>
<keyword id="KW-0653">Protein transport</keyword>
<keyword id="KW-1185">Reference proteome</keyword>
<keyword id="KW-0811">Translocation</keyword>
<keyword id="KW-0812">Transmembrane</keyword>
<keyword id="KW-1133">Transmembrane helix</keyword>
<keyword id="KW-0813">Transport</keyword>
<comment type="function">
    <text evidence="1">Essential component of the TIM23 complex, a complex that mediates the translocation of transit peptide-containing proteins across the mitochondrial inner membrane. Has a role in the activation of stress-induced mitophagy by protecting PINK1 from OMA1-mediated degradation and facilitating its accumulation at the outer mitochondrial membrane in response to depolarization.</text>
</comment>
<comment type="subunit">
    <text evidence="1">Component of the TIM23 complex at least composed of TIMM23, TIMM17 (TIMM17A or TIMM17B) and TIMM50; within this complex, directly interacts with TIMM50. The complex interacts with the TIMM44 component of the PAM complex and with DNAJC15. Upon mitochondrial depolarization, interacts with PINK1; the interaction is required for PINK1 accumulation at the outer mitochondrial membrane, kinase activation by autophosphorylation and PRKN recruitement to mitochondria.</text>
</comment>
<comment type="subcellular location">
    <subcellularLocation>
        <location evidence="3">Mitochondrion inner membrane</location>
        <topology evidence="2">Multi-pass membrane protein</topology>
    </subcellularLocation>
</comment>
<comment type="disruption phenotype">
    <text evidence="3">Mutants are not viable (PubMed:19111522). Heterozygous animals show an aneurological phenotype, premature aging and reduced lifespan (PubMed:19111522).</text>
</comment>
<comment type="similarity">
    <text evidence="4">Belongs to the Tim17/Tim22/Tim23 family.</text>
</comment>
<evidence type="ECO:0000250" key="1">
    <source>
        <dbReference type="UniProtKB" id="O14925"/>
    </source>
</evidence>
<evidence type="ECO:0000255" key="2"/>
<evidence type="ECO:0000269" key="3">
    <source>
    </source>
</evidence>
<evidence type="ECO:0000305" key="4"/>
<name>TIM23_MOUSE</name>
<gene>
    <name type="primary">Timm23</name>
    <name type="synonym">Tim23</name>
</gene>
<dbReference type="EMBL" id="AB021122">
    <property type="protein sequence ID" value="BAA78407.1"/>
    <property type="molecule type" value="mRNA"/>
</dbReference>
<dbReference type="CCDS" id="CCDS36864.1"/>
<dbReference type="SMR" id="Q9WTQ8"/>
<dbReference type="FunCoup" id="Q9WTQ8">
    <property type="interactions" value="1656"/>
</dbReference>
<dbReference type="IntAct" id="Q9WTQ8">
    <property type="interactions" value="1"/>
</dbReference>
<dbReference type="MINT" id="Q9WTQ8"/>
<dbReference type="STRING" id="10090.ENSMUSP00000013845"/>
<dbReference type="GlyGen" id="Q9WTQ8">
    <property type="glycosylation" value="1 site, 1 O-linked glycan (1 site)"/>
</dbReference>
<dbReference type="iPTMnet" id="Q9WTQ8"/>
<dbReference type="PhosphoSitePlus" id="Q9WTQ8"/>
<dbReference type="jPOST" id="Q9WTQ8"/>
<dbReference type="PaxDb" id="10090-ENSMUSP00000013845"/>
<dbReference type="PeptideAtlas" id="Q9WTQ8"/>
<dbReference type="ProteomicsDB" id="262786"/>
<dbReference type="Pumba" id="Q9WTQ8"/>
<dbReference type="AGR" id="MGI:1858317"/>
<dbReference type="MGI" id="MGI:1858317">
    <property type="gene designation" value="Timm23"/>
</dbReference>
<dbReference type="eggNOG" id="KOG3324">
    <property type="taxonomic scope" value="Eukaryota"/>
</dbReference>
<dbReference type="InParanoid" id="Q9WTQ8"/>
<dbReference type="PhylomeDB" id="Q9WTQ8"/>
<dbReference type="ChiTaRS" id="Timm23">
    <property type="organism name" value="mouse"/>
</dbReference>
<dbReference type="PRO" id="PR:Q9WTQ8"/>
<dbReference type="Proteomes" id="UP000000589">
    <property type="component" value="Unplaced"/>
</dbReference>
<dbReference type="RNAct" id="Q9WTQ8">
    <property type="molecule type" value="protein"/>
</dbReference>
<dbReference type="GO" id="GO:0140494">
    <property type="term" value="C:migrasome"/>
    <property type="evidence" value="ECO:0000314"/>
    <property type="project" value="MGI"/>
</dbReference>
<dbReference type="GO" id="GO:0005743">
    <property type="term" value="C:mitochondrial inner membrane"/>
    <property type="evidence" value="ECO:0007005"/>
    <property type="project" value="MGI"/>
</dbReference>
<dbReference type="GO" id="GO:0005758">
    <property type="term" value="C:mitochondrial intermembrane space"/>
    <property type="evidence" value="ECO:0000266"/>
    <property type="project" value="MGI"/>
</dbReference>
<dbReference type="GO" id="GO:0005739">
    <property type="term" value="C:mitochondrion"/>
    <property type="evidence" value="ECO:0000314"/>
    <property type="project" value="MGI"/>
</dbReference>
<dbReference type="GO" id="GO:0005744">
    <property type="term" value="C:TIM23 mitochondrial import inner membrane translocase complex"/>
    <property type="evidence" value="ECO:0007669"/>
    <property type="project" value="InterPro"/>
</dbReference>
<dbReference type="GO" id="GO:0008320">
    <property type="term" value="F:protein transmembrane transporter activity"/>
    <property type="evidence" value="ECO:0007669"/>
    <property type="project" value="InterPro"/>
</dbReference>
<dbReference type="GO" id="GO:0030150">
    <property type="term" value="P:protein import into mitochondrial matrix"/>
    <property type="evidence" value="ECO:0007669"/>
    <property type="project" value="InterPro"/>
</dbReference>
<dbReference type="GO" id="GO:0061734">
    <property type="term" value="P:type 2 mitophagy"/>
    <property type="evidence" value="ECO:0000250"/>
    <property type="project" value="UniProtKB"/>
</dbReference>
<dbReference type="InterPro" id="IPR005681">
    <property type="entry name" value="Tim23"/>
</dbReference>
<dbReference type="InterPro" id="IPR045238">
    <property type="entry name" value="Tim23-like"/>
</dbReference>
<dbReference type="NCBIfam" id="TIGR00983">
    <property type="entry name" value="3a0801s02tim23"/>
    <property type="match status" value="1"/>
</dbReference>
<dbReference type="PANTHER" id="PTHR15371:SF39">
    <property type="entry name" value="MITOCHONDRIAL IMPORT INNER MEMBRANE TRANSLOCASE SUBUNIT TIM23"/>
    <property type="match status" value="1"/>
</dbReference>
<dbReference type="PANTHER" id="PTHR15371">
    <property type="entry name" value="TIM23"/>
    <property type="match status" value="1"/>
</dbReference>
<dbReference type="Pfam" id="PF02466">
    <property type="entry name" value="Tim17"/>
    <property type="match status" value="1"/>
</dbReference>
<reference key="1">
    <citation type="journal article" date="2001" name="Mol. Cell. Endocrinol.">
        <title>Hormonal regulation of mitochondrial Tim23 gene expression in the mouse mammary gland.</title>
        <authorList>
            <person name="Sun Y."/>
            <person name="Kuraishi T."/>
            <person name="Aoki F."/>
            <person name="Sakai S."/>
        </authorList>
    </citation>
    <scope>NUCLEOTIDE SEQUENCE [MRNA]</scope>
    <source>
        <strain>JCL-ICR</strain>
        <tissue>Mammary gland</tissue>
    </source>
</reference>
<reference key="2">
    <citation type="journal article" date="2009" name="Biochim. Biophys. Acta">
        <title>Neurological phenotype and reduced lifespan in heterozygous Tim23 knockout mice, the first mouse model of defective mitochondrial import.</title>
        <authorList>
            <person name="Ahting U."/>
            <person name="Floss T."/>
            <person name="Uez N."/>
            <person name="Schneider-Lohmar I."/>
            <person name="Becker L."/>
            <person name="Kling E."/>
            <person name="Iuso A."/>
            <person name="Bender A."/>
            <person name="de Angelis M.H."/>
            <person name="Gailus-Durner V."/>
            <person name="Fuchs H."/>
            <person name="Meitinger T."/>
            <person name="Wurst W."/>
            <person name="Prokisch H."/>
            <person name="Klopstock T."/>
        </authorList>
    </citation>
    <scope>DISRUPTION PHENOTYPE</scope>
    <scope>SUBCELLULAR LOCATION</scope>
</reference>
<reference key="3">
    <citation type="journal article" date="2010" name="Cell">
        <title>A tissue-specific atlas of mouse protein phosphorylation and expression.</title>
        <authorList>
            <person name="Huttlin E.L."/>
            <person name="Jedrychowski M.P."/>
            <person name="Elias J.E."/>
            <person name="Goswami T."/>
            <person name="Rad R."/>
            <person name="Beausoleil S.A."/>
            <person name="Villen J."/>
            <person name="Haas W."/>
            <person name="Sowa M.E."/>
            <person name="Gygi S.P."/>
        </authorList>
    </citation>
    <scope>IDENTIFICATION BY MASS SPECTROMETRY [LARGE SCALE ANALYSIS]</scope>
    <source>
        <tissue>Brain</tissue>
        <tissue>Brown adipose tissue</tissue>
        <tissue>Heart</tissue>
        <tissue>Kidney</tissue>
        <tissue>Liver</tissue>
        <tissue>Lung</tissue>
        <tissue>Pancreas</tissue>
        <tissue>Spleen</tissue>
        <tissue>Testis</tissue>
    </source>
</reference>
<protein>
    <recommendedName>
        <fullName>Mitochondrial import inner membrane translocase subunit Tim23</fullName>
    </recommendedName>
</protein>
<proteinExistence type="evidence at protein level"/>
<feature type="chain" id="PRO_0000210303" description="Mitochondrial import inner membrane translocase subunit Tim23">
    <location>
        <begin position="1"/>
        <end position="209"/>
    </location>
</feature>
<feature type="transmembrane region" description="Helical" evidence="2">
    <location>
        <begin position="73"/>
        <end position="93"/>
    </location>
</feature>
<feature type="transmembrane region" description="Helical" evidence="2">
    <location>
        <begin position="125"/>
        <end position="145"/>
    </location>
</feature>
<feature type="transmembrane region" description="Helical" evidence="2">
    <location>
        <begin position="181"/>
        <end position="197"/>
    </location>
</feature>
<sequence>MEGGGRSSNKSTSGLAGFFGAGGAGYSNADLAGVPLTGMNPLSPYLNVDPRYLVQDTDEFILPTGANKTRGRFELAFFTIGGCCMTGAAFGAMNGLRLGLKETQSMAWSKPRNVQILNMVTRQGALWANTLGSLALLYSAFGVIIEKTRGAEDDLNTVAAGTMTGMLYKCTGGLRGIARGGLAGLTLTSLYALYNNWVHMKGSLLQQSL</sequence>
<organism>
    <name type="scientific">Mus musculus</name>
    <name type="common">Mouse</name>
    <dbReference type="NCBI Taxonomy" id="10090"/>
    <lineage>
        <taxon>Eukaryota</taxon>
        <taxon>Metazoa</taxon>
        <taxon>Chordata</taxon>
        <taxon>Craniata</taxon>
        <taxon>Vertebrata</taxon>
        <taxon>Euteleostomi</taxon>
        <taxon>Mammalia</taxon>
        <taxon>Eutheria</taxon>
        <taxon>Euarchontoglires</taxon>
        <taxon>Glires</taxon>
        <taxon>Rodentia</taxon>
        <taxon>Myomorpha</taxon>
        <taxon>Muroidea</taxon>
        <taxon>Muridae</taxon>
        <taxon>Murinae</taxon>
        <taxon>Mus</taxon>
        <taxon>Mus</taxon>
    </lineage>
</organism>